<reference key="1">
    <citation type="journal article" date="1985" name="J. Bacteriol.">
        <title>Nucleotide sequence of the gene for the vitamin B12 receptor protein in the outer membrane of Escherichia coli.</title>
        <authorList>
            <person name="Heller K."/>
            <person name="Kadner R.J."/>
        </authorList>
    </citation>
    <scope>NUCLEOTIDE SEQUENCE [GENOMIC DNA]</scope>
    <scope>MUTAGENESIS OF LEU-28</scope>
</reference>
<reference key="2">
    <citation type="journal article" date="1993" name="Nucleic Acids Res.">
        <title>Analysis of the Escherichia coli genome. IV. DNA sequence of the region from 89.2 to 92.8 minutes.</title>
        <authorList>
            <person name="Blattner F.R."/>
            <person name="Burland V.D."/>
            <person name="Plunkett G. III"/>
            <person name="Sofia H.J."/>
            <person name="Daniels D.L."/>
        </authorList>
    </citation>
    <scope>NUCLEOTIDE SEQUENCE [LARGE SCALE GENOMIC DNA]</scope>
    <source>
        <strain>K12 / MG1655 / ATCC 47076</strain>
    </source>
</reference>
<reference key="3">
    <citation type="journal article" date="1997" name="Science">
        <title>The complete genome sequence of Escherichia coli K-12.</title>
        <authorList>
            <person name="Blattner F.R."/>
            <person name="Plunkett G. III"/>
            <person name="Bloch C.A."/>
            <person name="Perna N.T."/>
            <person name="Burland V."/>
            <person name="Riley M."/>
            <person name="Collado-Vides J."/>
            <person name="Glasner J.D."/>
            <person name="Rode C.K."/>
            <person name="Mayhew G.F."/>
            <person name="Gregor J."/>
            <person name="Davis N.W."/>
            <person name="Kirkpatrick H.A."/>
            <person name="Goeden M.A."/>
            <person name="Rose D.J."/>
            <person name="Mau B."/>
            <person name="Shao Y."/>
        </authorList>
    </citation>
    <scope>NUCLEOTIDE SEQUENCE [LARGE SCALE GENOMIC DNA]</scope>
    <source>
        <strain>K12 / MG1655 / ATCC 47076</strain>
    </source>
</reference>
<reference key="4">
    <citation type="journal article" date="2006" name="Mol. Syst. Biol.">
        <title>Highly accurate genome sequences of Escherichia coli K-12 strains MG1655 and W3110.</title>
        <authorList>
            <person name="Hayashi K."/>
            <person name="Morooka N."/>
            <person name="Yamamoto Y."/>
            <person name="Fujita K."/>
            <person name="Isono K."/>
            <person name="Choi S."/>
            <person name="Ohtsubo E."/>
            <person name="Baba T."/>
            <person name="Wanner B.L."/>
            <person name="Mori H."/>
            <person name="Horiuchi T."/>
        </authorList>
    </citation>
    <scope>NUCLEOTIDE SEQUENCE [LARGE SCALE GENOMIC DNA]</scope>
    <source>
        <strain>K12 / W3110 / ATCC 27325 / DSM 5911</strain>
    </source>
</reference>
<reference key="5">
    <citation type="journal article" date="1991" name="J. Bacteriol.">
        <title>The trmA promoter has regulatory features and sequence elements in common with the rRNA P1 promoter family of Escherichia coli.</title>
        <authorList>
            <person name="Gustafsson C."/>
            <person name="Lindstroem P.H.R."/>
            <person name="Hagervall T.G."/>
            <person name="Esberg K.B."/>
            <person name="Bjoerk G.R."/>
        </authorList>
    </citation>
    <scope>NUCLEOTIDE SEQUENCE [GENOMIC DNA] OF 1-5</scope>
</reference>
<reference key="6">
    <citation type="journal article" date="1997" name="Electrophoresis">
        <title>Comparing the predicted and observed properties of proteins encoded in the genome of Escherichia coli K-12.</title>
        <authorList>
            <person name="Link A.J."/>
            <person name="Robison K."/>
            <person name="Church G.M."/>
        </authorList>
    </citation>
    <scope>PROTEIN SEQUENCE OF 21-32</scope>
    <source>
        <strain>K12 / EMG2</strain>
    </source>
</reference>
<reference key="7">
    <citation type="journal article" date="1993" name="J. Bacteriol.">
        <title>The Escherichia coli mutant requiring D-glutamic acid is the result of mutations in two distinct genetic loci.</title>
        <authorList>
            <person name="Dougherty T.J."/>
            <person name="Thanassi J.A."/>
            <person name="Pucci M.J."/>
        </authorList>
    </citation>
    <scope>NUCLEOTIDE SEQUENCE [GENOMIC DNA] OF 456-614</scope>
    <source>
        <strain>B/rWM335</strain>
    </source>
</reference>
<reference key="8">
    <citation type="journal article" date="1973" name="J. Bacteriol.">
        <title>Transport of vitamin B12 in Escherichia coli: common receptor sites for vitamin B12 and the E colicins on the outer membrane of the cell envelope.</title>
        <authorList>
            <person name="Di Masi D.R."/>
            <person name="White J.C."/>
            <person name="Schnaitman C.A."/>
            <person name="Bradbeer C."/>
        </authorList>
    </citation>
    <scope>FUNCTION IN VITAMIN B12 TRANSPORT</scope>
    <scope>FUNCTION AS RECEPTOR FOR COLICIN ENTRY INTO TARGET CELL (MICROBIAL INFECTION)</scope>
    <scope>ACTIVITY REGULATION</scope>
    <scope>DISRUPTION PHENOTYPE</scope>
    <source>
        <strain>K12 / KBT001</strain>
    </source>
</reference>
<reference key="9">
    <citation type="journal article" date="1985" name="J. Bacteriol.">
        <title>Cloning and expression of the gene for the vitamin B12 receptor protein in the outer membrane of Escherichia coli.</title>
        <authorList>
            <person name="Heller K."/>
            <person name="Mann B.J."/>
            <person name="Kadner R.J."/>
        </authorList>
    </citation>
    <scope>FUNCTION</scope>
    <scope>SUBCELLULAR LOCATION</scope>
    <source>
        <strain>K12</strain>
    </source>
</reference>
<reference key="10">
    <citation type="journal article" date="1989" name="J. Bacteriol.">
        <title>Point mutations in a conserved region (TonB box) of Escherichia coli outer membrane protein BtuB affect vitamin B12 transport.</title>
        <authorList>
            <person name="Gudmundsdottir A."/>
            <person name="Bell P.E."/>
            <person name="Lundrigan M.D."/>
            <person name="Bradbeer C."/>
            <person name="Kadner R.J."/>
        </authorList>
    </citation>
    <scope>FUNCTION</scope>
    <scope>SUBCELLULAR LOCATION</scope>
    <scope>MUTAGENESIS OF THE TONB BOX</scope>
</reference>
<reference key="11">
    <citation type="journal article" date="1998" name="J. Bacteriol.">
        <title>Coupled changes in translation and transcription during cobalamin-dependent regulation of btuB expression in Escherichia coli.</title>
        <authorList>
            <person name="Nou X."/>
            <person name="Kadner R.J."/>
        </authorList>
    </citation>
    <scope>INDUCTION</scope>
    <scope>REGULATION OF EXPRESSION</scope>
    <source>
        <strain>K12</strain>
    </source>
</reference>
<reference key="12">
    <citation type="journal article" date="1999" name="Proc. Natl. Acad. Sci. U.S.A.">
        <title>Site-directed disulfide bonding reveals an interaction site between energy-coupling protein TonB and BtuB, the outer membrane cobalamin transporter.</title>
        <authorList>
            <person name="Cadieux N."/>
            <person name="Kadner R.J."/>
        </authorList>
    </citation>
    <scope>FUNCTION</scope>
    <scope>INTERACTION WITH TONB</scope>
    <source>
        <strain>K12</strain>
    </source>
</reference>
<reference key="13">
    <citation type="journal article" date="2001" name="Biochemistry">
        <title>Transport-defective mutations alter the conformation of the energy-coupling motif of an outer membrane transporter.</title>
        <authorList>
            <person name="Coggshall K.A."/>
            <person name="Cadieux N."/>
            <person name="Piedmont C."/>
            <person name="Kadner R.J."/>
            <person name="Cafiso D.S."/>
        </authorList>
    </citation>
    <scope>MUTAGENESIS OF LEU-28 AND VAL-30</scope>
    <source>
        <strain>K12</strain>
    </source>
</reference>
<reference key="14">
    <citation type="journal article" date="2003" name="J. Mol. Biol.">
        <title>The Escherichia coli outer membrane cobalamin transporter BtuB: structural analysis of calcium and substrate binding, and identification of orthologous transporters by sequence/structure conservation.</title>
        <authorList>
            <person name="Chimento D.P."/>
            <person name="Kadner R.J."/>
            <person name="Wiener M.C."/>
        </authorList>
    </citation>
    <scope>CALCIUM-BINDING SITES AND SUBSTRATE-BINDING SITES</scope>
    <scope>ACTIVITY REGULATION</scope>
</reference>
<reference key="15">
    <citation type="journal article" date="2008" name="EMBO J.">
        <title>Crystal structures of the OmpF porin: function in a colicin translocon.</title>
        <authorList>
            <person name="Yamashita E."/>
            <person name="Zhalnina M.V."/>
            <person name="Zakharov S.D."/>
            <person name="Sharma O."/>
            <person name="Cramer W.A."/>
        </authorList>
    </citation>
    <scope>FUNCTION (MICROBIAL INFECTION)</scope>
    <scope>SUBUNIT</scope>
    <scope>DOMAIN</scope>
</reference>
<reference key="16">
    <citation type="journal article" date="2003" name="Acta Crystallogr. D">
        <title>Crystallization and initial X-ray diffraction of BtuB, the integral membrane cobalamin transporter of Escherichia coli.</title>
        <authorList>
            <person name="Chimento D.P."/>
            <person name="Mohanty A.K."/>
            <person name="Kadner R.J."/>
            <person name="Wiener M.C."/>
        </authorList>
    </citation>
    <scope>CRYSTALLIZATION</scope>
    <scope>SUBCELLULAR LOCATION</scope>
</reference>
<reference evidence="18 19 20 21" key="17">
    <citation type="journal article" date="2003" name="Nat. Struct. Biol.">
        <title>Substrate-induced transmembrane signaling in the cobalamin transporter BtuB.</title>
        <authorList>
            <person name="Chimento D.P."/>
            <person name="Mohanty A.K."/>
            <person name="Kadner R.J."/>
            <person name="Wiener M.C."/>
        </authorList>
    </citation>
    <scope>X-RAY CRYSTALLOGRAPHY (2.0 ANGSTROMS) OF 21-614 OF NATIVE PROTEIN AND COMPLEX WITH CALCIUM AND CYANOCOBALAMIN</scope>
    <scope>SUBCELLULAR LOCATION</scope>
    <scope>TOPOLOGY</scope>
</reference>
<reference key="18">
    <citation type="journal article" date="2003" name="Nat. Struct. Biol.">
        <title>The structure of BtuB with bound colicin E3 R-domain implies a translocon.</title>
        <authorList>
            <person name="Kurisu G."/>
            <person name="Zakharov S.D."/>
            <person name="Zhalnina M.V."/>
            <person name="Bano S."/>
            <person name="Eroukova V.Y."/>
            <person name="Rokitskaya T.I."/>
            <person name="Antonenko Y.N."/>
            <person name="Wiener M.C."/>
            <person name="Cramer W.A."/>
        </authorList>
    </citation>
    <scope>X-RAY CRYSTALLOGRAPHY (2.75 ANGSTROMS) OF 21-614 IN COMPLEX WITH COLICIN E3 RECEPTOR BINDING DOMAIN</scope>
    <scope>FUNCTION (MICROBIAL INFECTION)</scope>
    <scope>SUBUNIT (MICROBIAL INFECTION)</scope>
</reference>
<organism>
    <name type="scientific">Escherichia coli (strain K12)</name>
    <dbReference type="NCBI Taxonomy" id="83333"/>
    <lineage>
        <taxon>Bacteria</taxon>
        <taxon>Pseudomonadati</taxon>
        <taxon>Pseudomonadota</taxon>
        <taxon>Gammaproteobacteria</taxon>
        <taxon>Enterobacterales</taxon>
        <taxon>Enterobacteriaceae</taxon>
        <taxon>Escherichia</taxon>
    </lineage>
</organism>
<feature type="signal peptide" evidence="14">
    <location>
        <begin position="1"/>
        <end position="20"/>
    </location>
</feature>
<feature type="chain" id="PRO_0000003479" description="Vitamin B12 transporter BtuB">
    <location>
        <begin position="21"/>
        <end position="614"/>
    </location>
</feature>
<feature type="topological domain" description="Periplasmic" evidence="6">
    <location>
        <begin position="21"/>
        <end position="157"/>
    </location>
</feature>
<feature type="transmembrane region" description="Beta stranded">
    <location>
        <begin position="158"/>
        <end position="165"/>
    </location>
</feature>
<feature type="topological domain" description="Extracellular" evidence="6">
    <location>
        <begin position="166"/>
        <end position="168"/>
    </location>
</feature>
<feature type="transmembrane region" description="Beta stranded">
    <location>
        <begin position="169"/>
        <end position="178"/>
    </location>
</feature>
<feature type="topological domain" description="Periplasmic" evidence="6">
    <location>
        <begin position="179"/>
        <end position="183"/>
    </location>
</feature>
<feature type="transmembrane region" description="Beta stranded">
    <location>
        <begin position="184"/>
        <end position="195"/>
    </location>
</feature>
<feature type="topological domain" description="Extracellular" evidence="6">
    <location>
        <begin position="196"/>
        <end position="216"/>
    </location>
</feature>
<feature type="transmembrane region" description="Beta stranded">
    <location>
        <begin position="217"/>
        <end position="227"/>
    </location>
</feature>
<feature type="topological domain" description="Periplasmic" evidence="6">
    <location>
        <begin position="228"/>
        <end position="231"/>
    </location>
</feature>
<feature type="transmembrane region" description="Beta stranded">
    <location>
        <begin position="232"/>
        <end position="248"/>
    </location>
</feature>
<feature type="topological domain" description="Extracellular" evidence="6">
    <location>
        <begin position="249"/>
        <end position="262"/>
    </location>
</feature>
<feature type="transmembrane region" description="Beta stranded">
    <location>
        <begin position="263"/>
        <end position="277"/>
    </location>
</feature>
<feature type="topological domain" description="Periplasmic" evidence="6">
    <location>
        <position position="278"/>
    </location>
</feature>
<feature type="transmembrane region" description="Beta stranded">
    <location>
        <begin position="279"/>
        <end position="296"/>
    </location>
</feature>
<feature type="topological domain" description="Extracellular" evidence="6">
    <location>
        <begin position="297"/>
        <end position="308"/>
    </location>
</feature>
<feature type="transmembrane region" description="Beta stranded">
    <location>
        <begin position="309"/>
        <end position="325"/>
    </location>
</feature>
<feature type="topological domain" description="Periplasmic" evidence="6">
    <location>
        <begin position="326"/>
        <end position="327"/>
    </location>
</feature>
<feature type="transmembrane region" description="Beta stranded">
    <location>
        <begin position="328"/>
        <end position="337"/>
    </location>
</feature>
<feature type="topological domain" description="Extracellular" evidence="6">
    <location>
        <begin position="338"/>
        <end position="352"/>
    </location>
</feature>
<feature type="transmembrane region" description="Beta stranded">
    <location>
        <begin position="353"/>
        <end position="369"/>
    </location>
</feature>
<feature type="topological domain" description="Periplasmic" evidence="6">
    <location>
        <position position="370"/>
    </location>
</feature>
<feature type="transmembrane region" description="Beta stranded">
    <location>
        <begin position="371"/>
        <end position="381"/>
    </location>
</feature>
<feature type="topological domain" description="Extracellular" evidence="6">
    <location>
        <begin position="382"/>
        <end position="384"/>
    </location>
</feature>
<feature type="transmembrane region" description="Beta stranded">
    <location>
        <begin position="385"/>
        <end position="400"/>
    </location>
</feature>
<feature type="topological domain" description="Periplasmic" evidence="6">
    <location>
        <begin position="401"/>
        <end position="402"/>
    </location>
</feature>
<feature type="transmembrane region" description="Beta stranded">
    <location>
        <begin position="403"/>
        <end position="417"/>
    </location>
</feature>
<feature type="topological domain" description="Extracellular" evidence="6">
    <location>
        <begin position="418"/>
        <end position="433"/>
    </location>
</feature>
<feature type="transmembrane region" description="Beta stranded">
    <location>
        <begin position="434"/>
        <end position="443"/>
    </location>
</feature>
<feature type="topological domain" description="Periplasmic" evidence="6">
    <location>
        <begin position="444"/>
        <end position="448"/>
    </location>
</feature>
<feature type="transmembrane region" description="Beta stranded">
    <location>
        <begin position="449"/>
        <end position="458"/>
    </location>
</feature>
<feature type="topological domain" description="Extracellular" evidence="6">
    <location>
        <begin position="459"/>
        <end position="472"/>
    </location>
</feature>
<feature type="transmembrane region" description="Beta stranded">
    <location>
        <begin position="473"/>
        <end position="490"/>
    </location>
</feature>
<feature type="topological domain" description="Periplasmic" evidence="6">
    <location>
        <begin position="491"/>
        <end position="493"/>
    </location>
</feature>
<feature type="transmembrane region" description="Beta stranded">
    <location>
        <begin position="494"/>
        <end position="509"/>
    </location>
</feature>
<feature type="topological domain" description="Extracellular" evidence="6">
    <location>
        <begin position="510"/>
        <end position="516"/>
    </location>
</feature>
<feature type="transmembrane region" description="Beta stranded">
    <location>
        <begin position="517"/>
        <end position="529"/>
    </location>
</feature>
<feature type="topological domain" description="Periplasmic" evidence="6">
    <location>
        <begin position="530"/>
        <end position="534"/>
    </location>
</feature>
<feature type="transmembrane region" description="Beta stranded">
    <location>
        <begin position="535"/>
        <end position="550"/>
    </location>
</feature>
<feature type="topological domain" description="Extracellular" evidence="6">
    <location>
        <begin position="551"/>
        <end position="557"/>
    </location>
</feature>
<feature type="transmembrane region" description="Beta stranded">
    <location>
        <begin position="558"/>
        <end position="572"/>
    </location>
</feature>
<feature type="topological domain" description="Periplasmic" evidence="6">
    <location>
        <begin position="573"/>
        <end position="584"/>
    </location>
</feature>
<feature type="transmembrane region" description="Beta stranded">
    <location>
        <begin position="585"/>
        <end position="596"/>
    </location>
</feature>
<feature type="topological domain" description="Extracellular" evidence="6">
    <location>
        <begin position="597"/>
        <end position="601"/>
    </location>
</feature>
<feature type="transmembrane region" description="Beta stranded">
    <location>
        <begin position="602"/>
        <end position="614"/>
    </location>
</feature>
<feature type="domain" description="TBDR plug" evidence="2">
    <location>
        <begin position="38"/>
        <end position="152"/>
    </location>
</feature>
<feature type="domain" description="TBDR beta-barrel" evidence="2">
    <location>
        <begin position="155"/>
        <end position="614"/>
    </location>
</feature>
<feature type="short sequence motif" description="TonB box">
    <location>
        <begin position="26"/>
        <end position="33"/>
    </location>
</feature>
<feature type="short sequence motif" description="TonB C-terminal box">
    <location>
        <begin position="597"/>
        <end position="614"/>
    </location>
</feature>
<feature type="binding site" evidence="6 21">
    <location>
        <position position="83"/>
    </location>
    <ligand>
        <name>cyanocob(III)alamin</name>
        <dbReference type="ChEBI" id="CHEBI:17439"/>
    </ligand>
</feature>
<feature type="binding site" evidence="6 21">
    <location>
        <position position="85"/>
    </location>
    <ligand>
        <name>cyanocob(III)alamin</name>
        <dbReference type="ChEBI" id="CHEBI:17439"/>
    </ligand>
</feature>
<feature type="binding site" evidence="6 21">
    <location>
        <position position="92"/>
    </location>
    <ligand>
        <name>cyanocob(III)alamin</name>
        <dbReference type="ChEBI" id="CHEBI:17439"/>
    </ligand>
</feature>
<feature type="binding site" evidence="6 21">
    <location>
        <begin position="110"/>
        <end position="111"/>
    </location>
    <ligand>
        <name>cyanocob(III)alamin</name>
        <dbReference type="ChEBI" id="CHEBI:17439"/>
    </ligand>
</feature>
<feature type="binding site" evidence="6">
    <location>
        <position position="199"/>
    </location>
    <ligand>
        <name>Ca(2+)</name>
        <dbReference type="ChEBI" id="CHEBI:29108"/>
        <label>1</label>
    </ligand>
</feature>
<feature type="binding site" evidence="6">
    <location>
        <position position="211"/>
    </location>
    <ligand>
        <name>Ca(2+)</name>
        <dbReference type="ChEBI" id="CHEBI:29108"/>
        <label>1</label>
    </ligand>
</feature>
<feature type="binding site" evidence="6">
    <location>
        <position position="213"/>
    </location>
    <ligand>
        <name>Ca(2+)</name>
        <dbReference type="ChEBI" id="CHEBI:29108"/>
        <label>1</label>
    </ligand>
</feature>
<feature type="binding site" evidence="6">
    <location>
        <position position="213"/>
    </location>
    <ligand>
        <name>Ca(2+)</name>
        <dbReference type="ChEBI" id="CHEBI:29108"/>
        <label>2</label>
    </ligand>
</feature>
<feature type="binding site" evidence="6">
    <location>
        <position position="215"/>
    </location>
    <ligand>
        <name>Ca(2+)</name>
        <dbReference type="ChEBI" id="CHEBI:29108"/>
        <label>1</label>
    </ligand>
</feature>
<feature type="binding site" evidence="6">
    <location>
        <position position="215"/>
    </location>
    <ligand>
        <name>Ca(2+)</name>
        <dbReference type="ChEBI" id="CHEBI:29108"/>
        <label>2</label>
    </ligand>
</feature>
<feature type="binding site" evidence="6">
    <location>
        <position position="249"/>
    </location>
    <ligand>
        <name>Ca(2+)</name>
        <dbReference type="ChEBI" id="CHEBI:29108"/>
        <label>2</label>
    </ligand>
</feature>
<feature type="binding site" evidence="6">
    <location>
        <position position="250"/>
    </location>
    <ligand>
        <name>Ca(2+)</name>
        <dbReference type="ChEBI" id="CHEBI:29108"/>
        <label>1</label>
    </ligand>
</feature>
<feature type="binding site" evidence="6">
    <location>
        <position position="250"/>
    </location>
    <ligand>
        <name>Ca(2+)</name>
        <dbReference type="ChEBI" id="CHEBI:29108"/>
        <label>2</label>
    </ligand>
</feature>
<feature type="binding site" evidence="6 21">
    <location>
        <position position="251"/>
    </location>
    <ligand>
        <name>cyanocob(III)alamin</name>
        <dbReference type="ChEBI" id="CHEBI:17439"/>
    </ligand>
</feature>
<feature type="binding site" evidence="6">
    <location>
        <position position="261"/>
    </location>
    <ligand>
        <name>Ca(2+)</name>
        <dbReference type="ChEBI" id="CHEBI:29108"/>
        <label>2</label>
    </ligand>
</feature>
<feature type="binding site" evidence="6 21">
    <location>
        <position position="309"/>
    </location>
    <ligand>
        <name>cyanocob(III)alamin</name>
        <dbReference type="ChEBI" id="CHEBI:17439"/>
    </ligand>
</feature>
<feature type="binding site" evidence="6 21">
    <location>
        <position position="517"/>
    </location>
    <ligand>
        <name>cyanocob(III)alamin</name>
        <dbReference type="ChEBI" id="CHEBI:17439"/>
    </ligand>
</feature>
<feature type="binding site" evidence="6 21">
    <location>
        <position position="551"/>
    </location>
    <ligand>
        <name>cyanocob(III)alamin</name>
        <dbReference type="ChEBI" id="CHEBI:17439"/>
    </ligand>
</feature>
<feature type="mutagenesis site" description="Inactivates uptake." evidence="4 12">
    <original>L</original>
    <variation>P</variation>
    <location>
        <position position="28"/>
    </location>
</feature>
<feature type="mutagenesis site" description="Inactivates uptake." evidence="4">
    <original>V</original>
    <variation>G</variation>
    <variation>P</variation>
    <location>
        <position position="30"/>
    </location>
</feature>
<feature type="sequence conflict" description="In Ref. 1; AAA23524." evidence="17" ref="1">
    <original>A</original>
    <variation>G</variation>
    <location>
        <position position="162"/>
    </location>
</feature>
<feature type="sequence conflict" description="In Ref. 1; AAA23524." evidence="17" ref="1">
    <original>A</original>
    <variation>R</variation>
    <location>
        <position position="377"/>
    </location>
</feature>
<feature type="strand" evidence="26">
    <location>
        <begin position="28"/>
        <end position="30"/>
    </location>
</feature>
<feature type="turn" evidence="26">
    <location>
        <begin position="31"/>
        <end position="33"/>
    </location>
</feature>
<feature type="helix" evidence="26">
    <location>
        <begin position="39"/>
        <end position="41"/>
    </location>
</feature>
<feature type="strand" evidence="26">
    <location>
        <begin position="46"/>
        <end position="50"/>
    </location>
</feature>
<feature type="helix" evidence="26">
    <location>
        <begin position="51"/>
        <end position="57"/>
    </location>
</feature>
<feature type="strand" evidence="26">
    <location>
        <begin position="60"/>
        <end position="62"/>
    </location>
</feature>
<feature type="helix" evidence="26">
    <location>
        <begin position="63"/>
        <end position="66"/>
    </location>
</feature>
<feature type="strand" evidence="26">
    <location>
        <begin position="72"/>
        <end position="75"/>
    </location>
</feature>
<feature type="strand" evidence="26">
    <location>
        <begin position="85"/>
        <end position="88"/>
    </location>
</feature>
<feature type="helix" evidence="26">
    <location>
        <begin position="93"/>
        <end position="95"/>
    </location>
</feature>
<feature type="strand" evidence="26">
    <location>
        <begin position="96"/>
        <end position="100"/>
    </location>
</feature>
<feature type="helix" evidence="22">
    <location>
        <begin position="106"/>
        <end position="108"/>
    </location>
</feature>
<feature type="turn" evidence="27">
    <location>
        <begin position="109"/>
        <end position="111"/>
    </location>
</feature>
<feature type="helix" evidence="26">
    <location>
        <begin position="112"/>
        <end position="118"/>
    </location>
</feature>
<feature type="helix" evidence="26">
    <location>
        <begin position="121"/>
        <end position="123"/>
    </location>
</feature>
<feature type="strand" evidence="26">
    <location>
        <begin position="125"/>
        <end position="132"/>
    </location>
</feature>
<feature type="helix" evidence="26">
    <location>
        <begin position="135"/>
        <end position="138"/>
    </location>
</feature>
<feature type="strand" evidence="26">
    <location>
        <begin position="143"/>
        <end position="150"/>
    </location>
</feature>
<feature type="strand" evidence="26">
    <location>
        <begin position="157"/>
        <end position="165"/>
    </location>
</feature>
<feature type="turn" evidence="26">
    <location>
        <begin position="166"/>
        <end position="168"/>
    </location>
</feature>
<feature type="strand" evidence="26">
    <location>
        <begin position="169"/>
        <end position="181"/>
    </location>
</feature>
<feature type="strand" evidence="26">
    <location>
        <begin position="184"/>
        <end position="195"/>
    </location>
</feature>
<feature type="strand" evidence="25">
    <location>
        <begin position="205"/>
        <end position="207"/>
    </location>
</feature>
<feature type="strand" evidence="26">
    <location>
        <begin position="217"/>
        <end position="248"/>
    </location>
</feature>
<feature type="strand" evidence="24">
    <location>
        <begin position="255"/>
        <end position="257"/>
    </location>
</feature>
<feature type="strand" evidence="26">
    <location>
        <begin position="262"/>
        <end position="277"/>
    </location>
</feature>
<feature type="strand" evidence="26">
    <location>
        <begin position="279"/>
        <end position="297"/>
    </location>
</feature>
<feature type="turn" evidence="26">
    <location>
        <begin position="299"/>
        <end position="301"/>
    </location>
</feature>
<feature type="strand" evidence="25">
    <location>
        <begin position="303"/>
        <end position="305"/>
    </location>
</feature>
<feature type="strand" evidence="26">
    <location>
        <begin position="309"/>
        <end position="325"/>
    </location>
</feature>
<feature type="strand" evidence="26">
    <location>
        <begin position="327"/>
        <end position="343"/>
    </location>
</feature>
<feature type="helix" evidence="22">
    <location>
        <begin position="346"/>
        <end position="348"/>
    </location>
</feature>
<feature type="helix" evidence="26">
    <location>
        <begin position="349"/>
        <end position="351"/>
    </location>
</feature>
<feature type="strand" evidence="26">
    <location>
        <begin position="352"/>
        <end position="368"/>
    </location>
</feature>
<feature type="strand" evidence="26">
    <location>
        <begin position="371"/>
        <end position="382"/>
    </location>
</feature>
<feature type="turn" evidence="26">
    <location>
        <begin position="383"/>
        <end position="385"/>
    </location>
</feature>
<feature type="strand" evidence="26">
    <location>
        <begin position="386"/>
        <end position="400"/>
    </location>
</feature>
<feature type="strand" evidence="26">
    <location>
        <begin position="403"/>
        <end position="414"/>
    </location>
</feature>
<feature type="helix" evidence="26">
    <location>
        <begin position="418"/>
        <end position="422"/>
    </location>
</feature>
<feature type="strand" evidence="23">
    <location>
        <begin position="423"/>
        <end position="426"/>
    </location>
</feature>
<feature type="strand" evidence="26">
    <location>
        <begin position="433"/>
        <end position="446"/>
    </location>
</feature>
<feature type="strand" evidence="26">
    <location>
        <begin position="449"/>
        <end position="467"/>
    </location>
</feature>
<feature type="turn" evidence="26">
    <location>
        <begin position="468"/>
        <end position="471"/>
    </location>
</feature>
<feature type="strand" evidence="26">
    <location>
        <begin position="472"/>
        <end position="492"/>
    </location>
</feature>
<feature type="strand" evidence="26">
    <location>
        <begin position="495"/>
        <end position="508"/>
    </location>
</feature>
<feature type="turn" evidence="26">
    <location>
        <begin position="509"/>
        <end position="511"/>
    </location>
</feature>
<feature type="strand" evidence="26">
    <location>
        <begin position="520"/>
        <end position="531"/>
    </location>
</feature>
<feature type="strand" evidence="26">
    <location>
        <begin position="534"/>
        <end position="543"/>
    </location>
</feature>
<feature type="strand" evidence="26">
    <location>
        <begin position="546"/>
        <end position="550"/>
    </location>
</feature>
<feature type="strand" evidence="26">
    <location>
        <begin position="552"/>
        <end position="555"/>
    </location>
</feature>
<feature type="strand" evidence="26">
    <location>
        <begin position="557"/>
        <end position="561"/>
    </location>
</feature>
<feature type="strand" evidence="26">
    <location>
        <begin position="564"/>
        <end position="587"/>
    </location>
</feature>
<feature type="strand" evidence="26">
    <location>
        <begin position="605"/>
        <end position="613"/>
    </location>
</feature>
<accession>P06129</accession>
<accession>Q2M8R1</accession>
<keyword id="KW-0002">3D-structure</keyword>
<keyword id="KW-0106">Calcium</keyword>
<keyword id="KW-0998">Cell outer membrane</keyword>
<keyword id="KW-0903">Direct protein sequencing</keyword>
<keyword id="KW-0406">Ion transport</keyword>
<keyword id="KW-0472">Membrane</keyword>
<keyword id="KW-0479">Metal-binding</keyword>
<keyword id="KW-0626">Porin</keyword>
<keyword id="KW-0675">Receptor</keyword>
<keyword id="KW-1185">Reference proteome</keyword>
<keyword id="KW-0732">Signal</keyword>
<keyword id="KW-0798">TonB box</keyword>
<keyword id="KW-0812">Transmembrane</keyword>
<keyword id="KW-1134">Transmembrane beta strand</keyword>
<keyword id="KW-0813">Transport</keyword>
<proteinExistence type="evidence at protein level"/>
<evidence type="ECO:0000255" key="1">
    <source>
        <dbReference type="HAMAP-Rule" id="MF_01531"/>
    </source>
</evidence>
<evidence type="ECO:0000255" key="2">
    <source>
        <dbReference type="PROSITE-ProRule" id="PRU01360"/>
    </source>
</evidence>
<evidence type="ECO:0000269" key="3">
    <source>
    </source>
</evidence>
<evidence type="ECO:0000269" key="4">
    <source>
    </source>
</evidence>
<evidence type="ECO:0000269" key="5">
    <source>
    </source>
</evidence>
<evidence type="ECO:0000269" key="6">
    <source>
    </source>
</evidence>
<evidence type="ECO:0000269" key="7">
    <source>
    </source>
</evidence>
<evidence type="ECO:0000269" key="8">
    <source>
    </source>
</evidence>
<evidence type="ECO:0000269" key="9">
    <source>
    </source>
</evidence>
<evidence type="ECO:0000269" key="10">
    <source>
    </source>
</evidence>
<evidence type="ECO:0000269" key="11">
    <source>
    </source>
</evidence>
<evidence type="ECO:0000269" key="12">
    <source>
    </source>
</evidence>
<evidence type="ECO:0000269" key="13">
    <source>
    </source>
</evidence>
<evidence type="ECO:0000269" key="14">
    <source>
    </source>
</evidence>
<evidence type="ECO:0000269" key="15">
    <source>
    </source>
</evidence>
<evidence type="ECO:0000303" key="16">
    <source>
    </source>
</evidence>
<evidence type="ECO:0000305" key="17"/>
<evidence type="ECO:0007744" key="18">
    <source>
        <dbReference type="PDB" id="1NQE"/>
    </source>
</evidence>
<evidence type="ECO:0007744" key="19">
    <source>
        <dbReference type="PDB" id="1NQF"/>
    </source>
</evidence>
<evidence type="ECO:0007744" key="20">
    <source>
        <dbReference type="PDB" id="1NQG"/>
    </source>
</evidence>
<evidence type="ECO:0007744" key="21">
    <source>
        <dbReference type="PDB" id="1NQH"/>
    </source>
</evidence>
<evidence type="ECO:0007829" key="22">
    <source>
        <dbReference type="PDB" id="1NQE"/>
    </source>
</evidence>
<evidence type="ECO:0007829" key="23">
    <source>
        <dbReference type="PDB" id="1NQF"/>
    </source>
</evidence>
<evidence type="ECO:0007829" key="24">
    <source>
        <dbReference type="PDB" id="1NQH"/>
    </source>
</evidence>
<evidence type="ECO:0007829" key="25">
    <source>
        <dbReference type="PDB" id="2GSK"/>
    </source>
</evidence>
<evidence type="ECO:0007829" key="26">
    <source>
        <dbReference type="PDB" id="2GUF"/>
    </source>
</evidence>
<evidence type="ECO:0007829" key="27">
    <source>
        <dbReference type="PDB" id="3RGN"/>
    </source>
</evidence>
<gene>
    <name evidence="1 16" type="primary">btuB</name>
    <name type="synonym">bfe</name>
    <name type="synonym">cer</name>
    <name type="synonym">dcrC</name>
    <name type="ordered locus">b3966</name>
    <name type="ordered locus">JW3938</name>
</gene>
<name>BTUB_ECOLI</name>
<dbReference type="EMBL" id="M10112">
    <property type="protein sequence ID" value="AAA23524.1"/>
    <property type="molecule type" value="Genomic_DNA"/>
</dbReference>
<dbReference type="EMBL" id="U00006">
    <property type="protein sequence ID" value="AAC43072.1"/>
    <property type="molecule type" value="Genomic_DNA"/>
</dbReference>
<dbReference type="EMBL" id="U00096">
    <property type="protein sequence ID" value="AAC76948.1"/>
    <property type="molecule type" value="Genomic_DNA"/>
</dbReference>
<dbReference type="EMBL" id="AP009048">
    <property type="protein sequence ID" value="BAE77345.1"/>
    <property type="molecule type" value="Genomic_DNA"/>
</dbReference>
<dbReference type="EMBL" id="M57568">
    <property type="status" value="NOT_ANNOTATED_CDS"/>
    <property type="molecule type" value="Genomic_DNA"/>
</dbReference>
<dbReference type="EMBL" id="L14556">
    <property type="protein sequence ID" value="AAA23676.1"/>
    <property type="molecule type" value="Genomic_DNA"/>
</dbReference>
<dbReference type="PIR" id="A65204">
    <property type="entry name" value="QRECBT"/>
</dbReference>
<dbReference type="RefSeq" id="NP_418401.1">
    <property type="nucleotide sequence ID" value="NC_000913.3"/>
</dbReference>
<dbReference type="RefSeq" id="WP_000591359.1">
    <property type="nucleotide sequence ID" value="NZ_SSZK01000065.1"/>
</dbReference>
<dbReference type="PDB" id="1NQE">
    <property type="method" value="X-ray"/>
    <property type="resolution" value="2.00 A"/>
    <property type="chains" value="A=21-614"/>
</dbReference>
<dbReference type="PDB" id="1NQF">
    <property type="method" value="X-ray"/>
    <property type="resolution" value="2.70 A"/>
    <property type="chains" value="A=21-614"/>
</dbReference>
<dbReference type="PDB" id="1NQG">
    <property type="method" value="X-ray"/>
    <property type="resolution" value="3.31 A"/>
    <property type="chains" value="A=21-614"/>
</dbReference>
<dbReference type="PDB" id="1NQH">
    <property type="method" value="X-ray"/>
    <property type="resolution" value="3.10 A"/>
    <property type="chains" value="A=21-614"/>
</dbReference>
<dbReference type="PDB" id="1UJW">
    <property type="method" value="X-ray"/>
    <property type="resolution" value="2.75 A"/>
    <property type="chains" value="A=21-614"/>
</dbReference>
<dbReference type="PDB" id="2GSK">
    <property type="method" value="X-ray"/>
    <property type="resolution" value="2.10 A"/>
    <property type="chains" value="A=25-614"/>
</dbReference>
<dbReference type="PDB" id="2GUF">
    <property type="method" value="X-ray"/>
    <property type="resolution" value="1.95 A"/>
    <property type="chains" value="A=21-614"/>
</dbReference>
<dbReference type="PDB" id="2YSU">
    <property type="method" value="X-ray"/>
    <property type="resolution" value="3.50 A"/>
    <property type="chains" value="A=21-614"/>
</dbReference>
<dbReference type="PDB" id="3M8B">
    <property type="method" value="X-ray"/>
    <property type="resolution" value="2.44 A"/>
    <property type="chains" value="A=21-614"/>
</dbReference>
<dbReference type="PDB" id="3M8D">
    <property type="method" value="X-ray"/>
    <property type="resolution" value="2.44 A"/>
    <property type="chains" value="A=21-614"/>
</dbReference>
<dbReference type="PDB" id="3RGM">
    <property type="method" value="X-ray"/>
    <property type="resolution" value="2.60 A"/>
    <property type="chains" value="A=21-614"/>
</dbReference>
<dbReference type="PDB" id="3RGN">
    <property type="method" value="X-ray"/>
    <property type="resolution" value="2.30 A"/>
    <property type="chains" value="A=21-614"/>
</dbReference>
<dbReference type="PDB" id="7NSU">
    <property type="method" value="EM"/>
    <property type="resolution" value="4.70 A"/>
    <property type="chains" value="F=21-614"/>
</dbReference>
<dbReference type="PDBsum" id="1NQE"/>
<dbReference type="PDBsum" id="1NQF"/>
<dbReference type="PDBsum" id="1NQG"/>
<dbReference type="PDBsum" id="1NQH"/>
<dbReference type="PDBsum" id="1UJW"/>
<dbReference type="PDBsum" id="2GSK"/>
<dbReference type="PDBsum" id="2GUF"/>
<dbReference type="PDBsum" id="2YSU"/>
<dbReference type="PDBsum" id="3M8B"/>
<dbReference type="PDBsum" id="3M8D"/>
<dbReference type="PDBsum" id="3RGM"/>
<dbReference type="PDBsum" id="3RGN"/>
<dbReference type="PDBsum" id="7NSU"/>
<dbReference type="EMDB" id="EMD-12577"/>
<dbReference type="PCDDB" id="P06129"/>
<dbReference type="SMR" id="P06129"/>
<dbReference type="BioGRID" id="4259524">
    <property type="interactions" value="247"/>
</dbReference>
<dbReference type="ComplexPortal" id="CPX-1083">
    <property type="entry name" value="Cobalamin outer membrane transporter complex"/>
</dbReference>
<dbReference type="DIP" id="DIP-9232N"/>
<dbReference type="FunCoup" id="P06129">
    <property type="interactions" value="110"/>
</dbReference>
<dbReference type="IntAct" id="P06129">
    <property type="interactions" value="1"/>
</dbReference>
<dbReference type="STRING" id="511145.b3966"/>
<dbReference type="DrugBank" id="DB04233">
    <property type="generic name" value="(Hydroxyethyloxy)Tri(Ethyloxy)Octane"/>
</dbReference>
<dbReference type="DrugBank" id="DB04039">
    <property type="generic name" value="3-Oxo-Pentadecanoic Acid"/>
</dbReference>
<dbReference type="DrugBank" id="DB04147">
    <property type="generic name" value="Dodecyldimethylamine N-oxide"/>
</dbReference>
<dbReference type="TCDB" id="1.B.14.3.1">
    <property type="family name" value="the outer membrane receptor (omr) family"/>
</dbReference>
<dbReference type="jPOST" id="P06129"/>
<dbReference type="PaxDb" id="511145-b3966"/>
<dbReference type="EnsemblBacteria" id="AAC76948">
    <property type="protein sequence ID" value="AAC76948"/>
    <property type="gene ID" value="b3966"/>
</dbReference>
<dbReference type="GeneID" id="93777927"/>
<dbReference type="GeneID" id="948468"/>
<dbReference type="KEGG" id="ecj:JW3938"/>
<dbReference type="KEGG" id="eco:b3966"/>
<dbReference type="PATRIC" id="fig|1411691.4.peg.2738"/>
<dbReference type="EchoBASE" id="EB0124"/>
<dbReference type="eggNOG" id="COG4206">
    <property type="taxonomic scope" value="Bacteria"/>
</dbReference>
<dbReference type="HOGENOM" id="CLU_008287_18_5_6"/>
<dbReference type="InParanoid" id="P06129"/>
<dbReference type="OMA" id="SYELQWR"/>
<dbReference type="PhylomeDB" id="P06129"/>
<dbReference type="BioCyc" id="EcoCyc:EG10126-MONOMER"/>
<dbReference type="BioCyc" id="MetaCyc:EG10126-MONOMER"/>
<dbReference type="EvolutionaryTrace" id="P06129"/>
<dbReference type="PRO" id="PR:P06129"/>
<dbReference type="Proteomes" id="UP000000625">
    <property type="component" value="Chromosome"/>
</dbReference>
<dbReference type="GO" id="GO:0009279">
    <property type="term" value="C:cell outer membrane"/>
    <property type="evidence" value="ECO:0000314"/>
    <property type="project" value="EcoCyc"/>
</dbReference>
<dbReference type="GO" id="GO:0016020">
    <property type="term" value="C:membrane"/>
    <property type="evidence" value="ECO:0000314"/>
    <property type="project" value="CAFA"/>
</dbReference>
<dbReference type="GO" id="GO:0046930">
    <property type="term" value="C:pore complex"/>
    <property type="evidence" value="ECO:0007669"/>
    <property type="project" value="UniProtKB-KW"/>
</dbReference>
<dbReference type="GO" id="GO:1902495">
    <property type="term" value="C:transmembrane transporter complex"/>
    <property type="evidence" value="ECO:0000303"/>
    <property type="project" value="ComplexPortal"/>
</dbReference>
<dbReference type="GO" id="GO:0015420">
    <property type="term" value="F:ABC-type vitamin B12 transporter activity"/>
    <property type="evidence" value="ECO:0007669"/>
    <property type="project" value="InterPro"/>
</dbReference>
<dbReference type="GO" id="GO:0005509">
    <property type="term" value="F:calcium ion binding"/>
    <property type="evidence" value="ECO:0000314"/>
    <property type="project" value="EcoCyc"/>
</dbReference>
<dbReference type="GO" id="GO:0015288">
    <property type="term" value="F:porin activity"/>
    <property type="evidence" value="ECO:0007669"/>
    <property type="project" value="UniProtKB-KW"/>
</dbReference>
<dbReference type="GO" id="GO:0019904">
    <property type="term" value="F:protein domain specific binding"/>
    <property type="evidence" value="ECO:0000353"/>
    <property type="project" value="CAFA"/>
</dbReference>
<dbReference type="GO" id="GO:0015889">
    <property type="term" value="P:cobalamin transport"/>
    <property type="evidence" value="ECO:0000314"/>
    <property type="project" value="EcoCyc"/>
</dbReference>
<dbReference type="GO" id="GO:0034220">
    <property type="term" value="P:monoatomic ion transmembrane transport"/>
    <property type="evidence" value="ECO:0000314"/>
    <property type="project" value="CAFA"/>
</dbReference>
<dbReference type="CDD" id="cd01347">
    <property type="entry name" value="ligand_gated_channel"/>
    <property type="match status" value="1"/>
</dbReference>
<dbReference type="FunFam" id="2.170.130.10:FF:000002">
    <property type="entry name" value="Vitamin B12 transporter BtuB"/>
    <property type="match status" value="1"/>
</dbReference>
<dbReference type="FunFam" id="2.40.170.20:FF:000001">
    <property type="entry name" value="Vitamin B12 transporter BtuB"/>
    <property type="match status" value="1"/>
</dbReference>
<dbReference type="Gene3D" id="2.40.170.20">
    <property type="entry name" value="TonB-dependent receptor, beta-barrel domain"/>
    <property type="match status" value="1"/>
</dbReference>
<dbReference type="Gene3D" id="2.170.130.10">
    <property type="entry name" value="TonB-dependent receptor, plug domain"/>
    <property type="match status" value="1"/>
</dbReference>
<dbReference type="HAMAP" id="MF_01531">
    <property type="entry name" value="BtuB"/>
    <property type="match status" value="1"/>
</dbReference>
<dbReference type="InterPro" id="IPR010101">
    <property type="entry name" value="B12_transptr_BtuB"/>
</dbReference>
<dbReference type="InterPro" id="IPR012910">
    <property type="entry name" value="Plug_dom"/>
</dbReference>
<dbReference type="InterPro" id="IPR037066">
    <property type="entry name" value="Plug_dom_sf"/>
</dbReference>
<dbReference type="InterPro" id="IPR039426">
    <property type="entry name" value="TonB-dep_rcpt-like"/>
</dbReference>
<dbReference type="InterPro" id="IPR000531">
    <property type="entry name" value="TonB-dep_rcpt_b-brl"/>
</dbReference>
<dbReference type="InterPro" id="IPR010916">
    <property type="entry name" value="TonB_box_CS"/>
</dbReference>
<dbReference type="InterPro" id="IPR036942">
    <property type="entry name" value="TonB_rcpt_b-brl_sf"/>
</dbReference>
<dbReference type="InterPro" id="IPR010917">
    <property type="entry name" value="TonB_rcpt_CS"/>
</dbReference>
<dbReference type="NCBIfam" id="NF007926">
    <property type="entry name" value="PRK10641.1"/>
    <property type="match status" value="1"/>
</dbReference>
<dbReference type="NCBIfam" id="TIGR01779">
    <property type="entry name" value="TonB-B12"/>
    <property type="match status" value="1"/>
</dbReference>
<dbReference type="PANTHER" id="PTHR30069:SF53">
    <property type="entry name" value="COLICIN I RECEPTOR-RELATED"/>
    <property type="match status" value="1"/>
</dbReference>
<dbReference type="PANTHER" id="PTHR30069">
    <property type="entry name" value="TONB-DEPENDENT OUTER MEMBRANE RECEPTOR"/>
    <property type="match status" value="1"/>
</dbReference>
<dbReference type="Pfam" id="PF07715">
    <property type="entry name" value="Plug"/>
    <property type="match status" value="1"/>
</dbReference>
<dbReference type="Pfam" id="PF00593">
    <property type="entry name" value="TonB_dep_Rec_b-barrel"/>
    <property type="match status" value="1"/>
</dbReference>
<dbReference type="SUPFAM" id="SSF56935">
    <property type="entry name" value="Porins"/>
    <property type="match status" value="1"/>
</dbReference>
<dbReference type="PROSITE" id="PS00430">
    <property type="entry name" value="TONB_DEPENDENT_REC_1"/>
    <property type="match status" value="1"/>
</dbReference>
<dbReference type="PROSITE" id="PS01156">
    <property type="entry name" value="TONB_DEPENDENT_REC_2"/>
    <property type="match status" value="1"/>
</dbReference>
<dbReference type="PROSITE" id="PS52016">
    <property type="entry name" value="TONB_DEPENDENT_REC_3"/>
    <property type="match status" value="1"/>
</dbReference>
<comment type="function">
    <text evidence="1 3 10 11 13">Involved in the active translocation of vitamin B12 (cyanocobalamin) across the outer membrane to the periplasmic space (PubMed:4579869). It derives its energy for transport by interacting with the trans-periplasmic membrane protein TonB.</text>
</comment>
<comment type="function">
    <text evidence="8 9 13">(Microbial infection) Acts as a receptor for bacteriophages BF23 and C1, and for A and E colicins (PubMed:14528295, PubMed:4579869). Cyanocobalamin (CN-B12) in solid medium protects against colicins E1 and E3 (PubMed:4579869). Does not act as the translocon for colicin E3 (ColE3). The translocon is OmpF; trimeric complexes with ColE3, BtuB and OmpF can be cross-linked and immunoprecipitated (PubMed:18636093).</text>
</comment>
<comment type="activity regulation">
    <text evidence="7">Calcium increases vitamin B12 binding affinity by a factor of 50-100.</text>
</comment>
<comment type="activity regulation">
    <text evidence="13">(Microbial infection) Colicins E1, E3 and K inhibit cyanocobalamin (CN-B12) uptake; E1 and E3 inhibit binding of CN-B12 to cells while colicin K inhibits a later, energy-dependent step of CN-B12 (PubMed:4579869).</text>
</comment>
<comment type="subunit">
    <text evidence="3 8">Interacts with TonB.</text>
</comment>
<comment type="subunit">
    <text evidence="8 9">(Microbial infection) The hairpin motif of the receptor-binding domain of colicin E3 (ColE3) interacts with BtuB without displacing BtuB's central plug (PubMed:14528295). An N-terminal fragment of E3 binds OmpF; trimeric complexes with ColE3, BtuB and OmpF can be cross-linked and immunoprecipitated (PubMed:18636093).</text>
</comment>
<comment type="subcellular location">
    <subcellularLocation>
        <location evidence="1 5 6 10 11">Cell outer membrane</location>
        <topology evidence="1 5 6 10 11">Multi-pass membrane protein</topology>
    </subcellularLocation>
</comment>
<comment type="induction">
    <text evidence="15">Constitutively expressed. Primary control of btuB expression by cobalamin occurs at the level of translation initiation.</text>
</comment>
<comment type="disruption phenotype">
    <text evidence="13">No longer takes up colicins E1 and E3; colicin K uptake does not change.</text>
</comment>
<comment type="similarity">
    <text evidence="1 17">Belongs to the TonB-dependent receptor family. BtuB (TC 1.B.14.3.1) subfamily.</text>
</comment>
<sequence length="614" mass="68407">MIKKASLLTACSVTAFSAWAQDTSPDTLVVTANRFEQPRSTVLAPTTVVTRQDIDRWQSTSVNDVLRRLPGVDITQNGGSGQLSSIFIRGTNASHVLVLIDGVRLNLAGVSGSADLSQFPIALVQRVEYIRGPRSAVYGSDAIGGVVNIITTRDEPGTEISAGWGSNSYQNYDVSTQQQLGDKTRVTLLGDYAHTHGYDVVAYGNTGTQAQTDNDGFLSKTLYGALEHNFTDAWSGFVRGYGYDNRTNYDAYYSPGSPLLDTRKLYSQSWDAGLRYNGELIKSQLITSYSHSKDYNYDPHYGRYDSSATLDEMKQYTVQWANNVIVGHGSIGAGVDWQKQTTTPGTGYVEDGYDQRNTGIYLTGLQQVGDFTFEGAARSDDNSQFGRHGTWQTSAGWEFIEGYRFIASYGTSYKAPNLGQLYGFYGNPNLDPEKSKQWEGAFEGLTAGVNWRISGYRNDVSDLIDYDDHTLKYYNEGKARIKGVEATANFDTGPLTHTVSYDYVDARNAITDTPLLRRAKQQVKYQLDWQLYDFDWGITYQYLGTRYDKDYSSYPYQTVKMGGVSLWDLAVAYPVTSHLTVRGKIANLFDKDYETVYGYQTAGREYTLSGSYTF</sequence>
<protein>
    <recommendedName>
        <fullName evidence="1">Vitamin B12 transporter BtuB</fullName>
    </recommendedName>
    <alternativeName>
        <fullName evidence="1">Cobalamin receptor</fullName>
    </alternativeName>
    <alternativeName>
        <fullName evidence="1">Outer membrane cobalamin translocator</fullName>
    </alternativeName>
</protein>